<organism>
    <name type="scientific">Vireo altiloquus</name>
    <name type="common">Black-whiskered vireo</name>
    <name type="synonym">Muscicapa altiloqua</name>
    <dbReference type="NCBI Taxonomy" id="34956"/>
    <lineage>
        <taxon>Eukaryota</taxon>
        <taxon>Metazoa</taxon>
        <taxon>Chordata</taxon>
        <taxon>Craniata</taxon>
        <taxon>Vertebrata</taxon>
        <taxon>Euteleostomi</taxon>
        <taxon>Archelosauria</taxon>
        <taxon>Archosauria</taxon>
        <taxon>Dinosauria</taxon>
        <taxon>Saurischia</taxon>
        <taxon>Theropoda</taxon>
        <taxon>Coelurosauria</taxon>
        <taxon>Aves</taxon>
        <taxon>Neognathae</taxon>
        <taxon>Neoaves</taxon>
        <taxon>Telluraves</taxon>
        <taxon>Australaves</taxon>
        <taxon>Passeriformes</taxon>
        <taxon>Corvoidea</taxon>
        <taxon>Vireonidae</taxon>
        <taxon>Vireoninae</taxon>
        <taxon>Vireo</taxon>
    </lineage>
</organism>
<dbReference type="EMBL" id="AF132434">
    <property type="protein sequence ID" value="AAF37144.1"/>
    <property type="molecule type" value="Genomic_DNA"/>
</dbReference>
<dbReference type="EMBL" id="AF132435">
    <property type="protein sequence ID" value="AAF37146.1"/>
    <property type="molecule type" value="Genomic_DNA"/>
</dbReference>
<dbReference type="EMBL" id="AF132436">
    <property type="protein sequence ID" value="AAF37148.1"/>
    <property type="molecule type" value="Genomic_DNA"/>
</dbReference>
<dbReference type="EMBL" id="AF132437">
    <property type="protein sequence ID" value="AAF37150.1"/>
    <property type="molecule type" value="Genomic_DNA"/>
</dbReference>
<dbReference type="SMR" id="Q9ME31"/>
<dbReference type="GO" id="GO:0031966">
    <property type="term" value="C:mitochondrial membrane"/>
    <property type="evidence" value="ECO:0007669"/>
    <property type="project" value="UniProtKB-SubCell"/>
</dbReference>
<dbReference type="GO" id="GO:0045259">
    <property type="term" value="C:proton-transporting ATP synthase complex"/>
    <property type="evidence" value="ECO:0007669"/>
    <property type="project" value="UniProtKB-KW"/>
</dbReference>
<dbReference type="GO" id="GO:0015078">
    <property type="term" value="F:proton transmembrane transporter activity"/>
    <property type="evidence" value="ECO:0007669"/>
    <property type="project" value="InterPro"/>
</dbReference>
<dbReference type="GO" id="GO:0015986">
    <property type="term" value="P:proton motive force-driven ATP synthesis"/>
    <property type="evidence" value="ECO:0007669"/>
    <property type="project" value="InterPro"/>
</dbReference>
<dbReference type="InterPro" id="IPR001421">
    <property type="entry name" value="ATP8_metazoa"/>
</dbReference>
<dbReference type="InterPro" id="IPR050635">
    <property type="entry name" value="ATPase_protein_8"/>
</dbReference>
<dbReference type="PANTHER" id="PTHR39937">
    <property type="entry name" value="ATP SYNTHASE PROTEIN 8"/>
    <property type="match status" value="1"/>
</dbReference>
<dbReference type="PANTHER" id="PTHR39937:SF1">
    <property type="entry name" value="ATP SYNTHASE PROTEIN 8"/>
    <property type="match status" value="1"/>
</dbReference>
<dbReference type="Pfam" id="PF00895">
    <property type="entry name" value="ATP-synt_8"/>
    <property type="match status" value="1"/>
</dbReference>
<protein>
    <recommendedName>
        <fullName>ATP synthase protein 8</fullName>
    </recommendedName>
    <alternativeName>
        <fullName>A6L</fullName>
    </alternativeName>
    <alternativeName>
        <fullName>F-ATPase subunit 8</fullName>
    </alternativeName>
</protein>
<evidence type="ECO:0000250" key="1"/>
<evidence type="ECO:0000255" key="2"/>
<evidence type="ECO:0000256" key="3">
    <source>
        <dbReference type="SAM" id="MobiDB-lite"/>
    </source>
</evidence>
<evidence type="ECO:0000305" key="4"/>
<gene>
    <name type="primary">MT-ATP8</name>
    <name type="synonym">ATP8</name>
    <name type="synonym">ATPASE8</name>
    <name type="synonym">MTATP8</name>
</gene>
<name>ATP8_VIRAL</name>
<comment type="function">
    <text evidence="1">Mitochondrial membrane ATP synthase (F(1)F(0) ATP synthase or Complex V) produces ATP from ADP in the presence of a proton gradient across the membrane which is generated by electron transport complexes of the respiratory chain. F-type ATPases consist of two structural domains, F(1) - containing the extramembraneous catalytic core and F(0) - containing the membrane proton channel, linked together by a central stalk and a peripheral stalk. During catalysis, ATP synthesis in the catalytic domain of F(1) is coupled via a rotary mechanism of the central stalk subunits to proton translocation. Part of the complex F(0) domain. Minor subunit located with subunit a in the membrane (By similarity).</text>
</comment>
<comment type="subunit">
    <text evidence="1">F-type ATPases have 2 components, CF(1) - the catalytic core - and CF(0) - the membrane proton channel.</text>
</comment>
<comment type="subcellular location">
    <subcellularLocation>
        <location>Mitochondrion membrane</location>
        <topology>Single-pass membrane protein</topology>
    </subcellularLocation>
</comment>
<comment type="similarity">
    <text evidence="4">Belongs to the ATPase protein 8 family.</text>
</comment>
<geneLocation type="mitochondrion"/>
<accession>Q9ME31</accession>
<feature type="chain" id="PRO_0000195593" description="ATP synthase protein 8">
    <location>
        <begin position="1"/>
        <end position="55"/>
    </location>
</feature>
<feature type="transmembrane region" description="Helical" evidence="2">
    <location>
        <begin position="7"/>
        <end position="24"/>
    </location>
</feature>
<feature type="region of interest" description="Disordered" evidence="3">
    <location>
        <begin position="34"/>
        <end position="55"/>
    </location>
</feature>
<feature type="compositionally biased region" description="Low complexity" evidence="3">
    <location>
        <begin position="43"/>
        <end position="55"/>
    </location>
</feature>
<keyword id="KW-0066">ATP synthesis</keyword>
<keyword id="KW-0138">CF(0)</keyword>
<keyword id="KW-0375">Hydrogen ion transport</keyword>
<keyword id="KW-0406">Ion transport</keyword>
<keyword id="KW-0472">Membrane</keyword>
<keyword id="KW-0496">Mitochondrion</keyword>
<keyword id="KW-0812">Transmembrane</keyword>
<keyword id="KW-1133">Transmembrane helix</keyword>
<keyword id="KW-0813">Transport</keyword>
<proteinExistence type="inferred from homology"/>
<reference key="1">
    <citation type="journal article" date="1999" name="Biol. Invasions">
        <title>The assembly of an island fauna by natural invasion: sources and temporal patterns in the avian colonization of Barbados.</title>
        <authorList>
            <person name="Lovette I.J."/>
            <person name="Seutin G."/>
            <person name="Ricklefs R.E."/>
            <person name="Bermingham E."/>
        </authorList>
        <dbReference type="AGRICOLA" id="IND23252729"/>
    </citation>
    <scope>NUCLEOTIDE SEQUENCE [GENOMIC DNA]</scope>
    <source>
        <strain>Isolate BA-VAL12</strain>
        <strain>Isolate BA-VAL8</strain>
        <strain>Isolate SL-VAL1</strain>
        <strain>Isolate SL-VAL9</strain>
    </source>
</reference>
<sequence>MPQLNPNPWFFIMIISWLTYSMIIQPKILSFTSTNPPARKEPTTNTTTPWNWPWT</sequence>